<feature type="chain" id="PRO_0000223039" description="Early meiotic induction protein 1">
    <location>
        <begin position="1"/>
        <end position="187"/>
    </location>
</feature>
<comment type="function">
    <text evidence="1">Involved in sporulation. Required for the full activation of the early meiotic inducer IME1.</text>
</comment>
<comment type="similarity">
    <text evidence="2">Belongs to the EMI1 family.</text>
</comment>
<proteinExistence type="inferred from homology"/>
<protein>
    <recommendedName>
        <fullName>Early meiotic induction protein 1</fullName>
    </recommendedName>
</protein>
<accession>Q04406</accession>
<accession>D6VTD3</accession>
<gene>
    <name type="primary">EMI1</name>
    <name type="ordered locus">YDR512C</name>
    <name type="ORF">D9719.18</name>
</gene>
<name>EMI1_YEAST</name>
<keyword id="KW-0469">Meiosis</keyword>
<keyword id="KW-1185">Reference proteome</keyword>
<keyword id="KW-0749">Sporulation</keyword>
<organism>
    <name type="scientific">Saccharomyces cerevisiae (strain ATCC 204508 / S288c)</name>
    <name type="common">Baker's yeast</name>
    <dbReference type="NCBI Taxonomy" id="559292"/>
    <lineage>
        <taxon>Eukaryota</taxon>
        <taxon>Fungi</taxon>
        <taxon>Dikarya</taxon>
        <taxon>Ascomycota</taxon>
        <taxon>Saccharomycotina</taxon>
        <taxon>Saccharomycetes</taxon>
        <taxon>Saccharomycetales</taxon>
        <taxon>Saccharomycetaceae</taxon>
        <taxon>Saccharomyces</taxon>
    </lineage>
</organism>
<sequence length="187" mass="21071">MIITIKFESKEKLVSMKQYITVVGVSVNQEGTFSWRPGTFYMKIHEESAAGPFAKGAEISDLSNSSAIGCGISINQEGGDGSIRVKESSLRKKQERMSTKYPTTMSCREAFDQLTSCYSIGGQFRSYYRYGDFTSCDKQVSKFKFCIIHGNDPVKVQEWYKDQVSNNKALENTSGVIWQERETTANK</sequence>
<dbReference type="EMBL" id="U33057">
    <property type="protein sequence ID" value="AAB64954.1"/>
    <property type="molecule type" value="Genomic_DNA"/>
</dbReference>
<dbReference type="EMBL" id="BK006938">
    <property type="protein sequence ID" value="DAA12343.1"/>
    <property type="molecule type" value="Genomic_DNA"/>
</dbReference>
<dbReference type="PIR" id="S69569">
    <property type="entry name" value="S69569"/>
</dbReference>
<dbReference type="RefSeq" id="NP_010800.3">
    <property type="nucleotide sequence ID" value="NM_001180820.3"/>
</dbReference>
<dbReference type="BioGRID" id="32564">
    <property type="interactions" value="255"/>
</dbReference>
<dbReference type="DIP" id="DIP-5374N"/>
<dbReference type="FunCoup" id="Q04406">
    <property type="interactions" value="26"/>
</dbReference>
<dbReference type="IntAct" id="Q04406">
    <property type="interactions" value="1"/>
</dbReference>
<dbReference type="STRING" id="4932.YDR512C"/>
<dbReference type="iPTMnet" id="Q04406"/>
<dbReference type="PaxDb" id="4932-YDR512C"/>
<dbReference type="PeptideAtlas" id="Q04406"/>
<dbReference type="EnsemblFungi" id="YDR512C_mRNA">
    <property type="protein sequence ID" value="YDR512C"/>
    <property type="gene ID" value="YDR512C"/>
</dbReference>
<dbReference type="GeneID" id="852125"/>
<dbReference type="KEGG" id="sce:YDR512C"/>
<dbReference type="AGR" id="SGD:S000002920"/>
<dbReference type="SGD" id="S000002920">
    <property type="gene designation" value="EMI1"/>
</dbReference>
<dbReference type="VEuPathDB" id="FungiDB:YDR512C"/>
<dbReference type="eggNOG" id="ENOG502S4MN">
    <property type="taxonomic scope" value="Eukaryota"/>
</dbReference>
<dbReference type="HOGENOM" id="CLU_1556487_0_0_1"/>
<dbReference type="InParanoid" id="Q04406"/>
<dbReference type="OrthoDB" id="2017405at2759"/>
<dbReference type="BioCyc" id="YEAST:G3O-30032-MONOMER"/>
<dbReference type="BioGRID-ORCS" id="852125">
    <property type="hits" value="0 hits in 10 CRISPR screens"/>
</dbReference>
<dbReference type="PRO" id="PR:Q04406"/>
<dbReference type="Proteomes" id="UP000002311">
    <property type="component" value="Chromosome IV"/>
</dbReference>
<dbReference type="RNAct" id="Q04406">
    <property type="molecule type" value="protein"/>
</dbReference>
<dbReference type="GO" id="GO:0030437">
    <property type="term" value="P:ascospore formation"/>
    <property type="evidence" value="ECO:0007001"/>
    <property type="project" value="SGD"/>
</dbReference>
<dbReference type="GO" id="GO:0007005">
    <property type="term" value="P:mitochondrion organization"/>
    <property type="evidence" value="ECO:0000315"/>
    <property type="project" value="SGD"/>
</dbReference>
<dbReference type="InterPro" id="IPR021475">
    <property type="entry name" value="Pants/Emi1-like"/>
</dbReference>
<dbReference type="PANTHER" id="PTHR28052">
    <property type="entry name" value="UPF0545 PROTEIN C22ORF39"/>
    <property type="match status" value="1"/>
</dbReference>
<dbReference type="PANTHER" id="PTHR28052:SF1">
    <property type="entry name" value="UPF0545 PROTEIN C22ORF39"/>
    <property type="match status" value="1"/>
</dbReference>
<dbReference type="Pfam" id="PF11326">
    <property type="entry name" value="PANTS-like"/>
    <property type="match status" value="1"/>
</dbReference>
<reference key="1">
    <citation type="journal article" date="1997" name="Nature">
        <title>The nucleotide sequence of Saccharomyces cerevisiae chromosome IV.</title>
        <authorList>
            <person name="Jacq C."/>
            <person name="Alt-Moerbe J."/>
            <person name="Andre B."/>
            <person name="Arnold W."/>
            <person name="Bahr A."/>
            <person name="Ballesta J.P.G."/>
            <person name="Bargues M."/>
            <person name="Baron L."/>
            <person name="Becker A."/>
            <person name="Biteau N."/>
            <person name="Bloecker H."/>
            <person name="Blugeon C."/>
            <person name="Boskovic J."/>
            <person name="Brandt P."/>
            <person name="Brueckner M."/>
            <person name="Buitrago M.J."/>
            <person name="Coster F."/>
            <person name="Delaveau T."/>
            <person name="del Rey F."/>
            <person name="Dujon B."/>
            <person name="Eide L.G."/>
            <person name="Garcia-Cantalejo J.M."/>
            <person name="Goffeau A."/>
            <person name="Gomez-Peris A."/>
            <person name="Granotier C."/>
            <person name="Hanemann V."/>
            <person name="Hankeln T."/>
            <person name="Hoheisel J.D."/>
            <person name="Jaeger W."/>
            <person name="Jimenez A."/>
            <person name="Jonniaux J.-L."/>
            <person name="Kraemer C."/>
            <person name="Kuester H."/>
            <person name="Laamanen P."/>
            <person name="Legros Y."/>
            <person name="Louis E.J."/>
            <person name="Moeller-Rieker S."/>
            <person name="Monnet A."/>
            <person name="Moro M."/>
            <person name="Mueller-Auer S."/>
            <person name="Nussbaumer B."/>
            <person name="Paricio N."/>
            <person name="Paulin L."/>
            <person name="Perea J."/>
            <person name="Perez-Alonso M."/>
            <person name="Perez-Ortin J.E."/>
            <person name="Pohl T.M."/>
            <person name="Prydz H."/>
            <person name="Purnelle B."/>
            <person name="Rasmussen S.W."/>
            <person name="Remacha M.A."/>
            <person name="Revuelta J.L."/>
            <person name="Rieger M."/>
            <person name="Salom D."/>
            <person name="Saluz H.P."/>
            <person name="Saiz J.E."/>
            <person name="Saren A.-M."/>
            <person name="Schaefer M."/>
            <person name="Scharfe M."/>
            <person name="Schmidt E.R."/>
            <person name="Schneider C."/>
            <person name="Scholler P."/>
            <person name="Schwarz S."/>
            <person name="Soler-Mira A."/>
            <person name="Urrestarazu L.A."/>
            <person name="Verhasselt P."/>
            <person name="Vissers S."/>
            <person name="Voet M."/>
            <person name="Volckaert G."/>
            <person name="Wagner G."/>
            <person name="Wambutt R."/>
            <person name="Wedler E."/>
            <person name="Wedler H."/>
            <person name="Woelfl S."/>
            <person name="Harris D.E."/>
            <person name="Bowman S."/>
            <person name="Brown D."/>
            <person name="Churcher C.M."/>
            <person name="Connor R."/>
            <person name="Dedman K."/>
            <person name="Gentles S."/>
            <person name="Hamlin N."/>
            <person name="Hunt S."/>
            <person name="Jones L."/>
            <person name="McDonald S."/>
            <person name="Murphy L.D."/>
            <person name="Niblett D."/>
            <person name="Odell C."/>
            <person name="Oliver K."/>
            <person name="Rajandream M.A."/>
            <person name="Richards C."/>
            <person name="Shore L."/>
            <person name="Walsh S.V."/>
            <person name="Barrell B.G."/>
            <person name="Dietrich F.S."/>
            <person name="Mulligan J.T."/>
            <person name="Allen E."/>
            <person name="Araujo R."/>
            <person name="Aviles E."/>
            <person name="Berno A."/>
            <person name="Carpenter J."/>
            <person name="Chen E."/>
            <person name="Cherry J.M."/>
            <person name="Chung E."/>
            <person name="Duncan M."/>
            <person name="Hunicke-Smith S."/>
            <person name="Hyman R.W."/>
            <person name="Komp C."/>
            <person name="Lashkari D."/>
            <person name="Lew H."/>
            <person name="Lin D."/>
            <person name="Mosedale D."/>
            <person name="Nakahara K."/>
            <person name="Namath A."/>
            <person name="Oefner P."/>
            <person name="Oh C."/>
            <person name="Petel F.X."/>
            <person name="Roberts D."/>
            <person name="Schramm S."/>
            <person name="Schroeder M."/>
            <person name="Shogren T."/>
            <person name="Shroff N."/>
            <person name="Winant A."/>
            <person name="Yelton M.A."/>
            <person name="Botstein D."/>
            <person name="Davis R.W."/>
            <person name="Johnston M."/>
            <person name="Andrews S."/>
            <person name="Brinkman R."/>
            <person name="Cooper J."/>
            <person name="Ding H."/>
            <person name="Du Z."/>
            <person name="Favello A."/>
            <person name="Fulton L."/>
            <person name="Gattung S."/>
            <person name="Greco T."/>
            <person name="Hallsworth K."/>
            <person name="Hawkins J."/>
            <person name="Hillier L.W."/>
            <person name="Jier M."/>
            <person name="Johnson D."/>
            <person name="Johnston L."/>
            <person name="Kirsten J."/>
            <person name="Kucaba T."/>
            <person name="Langston Y."/>
            <person name="Latreille P."/>
            <person name="Le T."/>
            <person name="Mardis E."/>
            <person name="Menezes S."/>
            <person name="Miller N."/>
            <person name="Nhan M."/>
            <person name="Pauley A."/>
            <person name="Peluso D."/>
            <person name="Rifkin L."/>
            <person name="Riles L."/>
            <person name="Taich A."/>
            <person name="Trevaskis E."/>
            <person name="Vignati D."/>
            <person name="Wilcox L."/>
            <person name="Wohldman P."/>
            <person name="Vaudin M."/>
            <person name="Wilson R."/>
            <person name="Waterston R."/>
            <person name="Albermann K."/>
            <person name="Hani J."/>
            <person name="Heumann K."/>
            <person name="Kleine K."/>
            <person name="Mewes H.-W."/>
            <person name="Zollner A."/>
            <person name="Zaccaria P."/>
        </authorList>
    </citation>
    <scope>NUCLEOTIDE SEQUENCE [LARGE SCALE GENOMIC DNA]</scope>
    <source>
        <strain>ATCC 204508 / S288c</strain>
    </source>
</reference>
<reference key="2">
    <citation type="journal article" date="2014" name="G3 (Bethesda)">
        <title>The reference genome sequence of Saccharomyces cerevisiae: Then and now.</title>
        <authorList>
            <person name="Engel S.R."/>
            <person name="Dietrich F.S."/>
            <person name="Fisk D.G."/>
            <person name="Binkley G."/>
            <person name="Balakrishnan R."/>
            <person name="Costanzo M.C."/>
            <person name="Dwight S.S."/>
            <person name="Hitz B.C."/>
            <person name="Karra K."/>
            <person name="Nash R.S."/>
            <person name="Weng S."/>
            <person name="Wong E.D."/>
            <person name="Lloyd P."/>
            <person name="Skrzypek M.S."/>
            <person name="Miyasato S.R."/>
            <person name="Simison M."/>
            <person name="Cherry J.M."/>
        </authorList>
    </citation>
    <scope>GENOME REANNOTATION</scope>
    <source>
        <strain>ATCC 204508 / S288c</strain>
    </source>
</reference>
<reference key="3">
    <citation type="journal article" date="2003" name="Genetics">
        <title>Large-scale functional genomic analysis of sporulation and meiosis in Saccharomyces cerevisiae.</title>
        <authorList>
            <person name="Enyenihi A.H."/>
            <person name="Saunders W.S."/>
        </authorList>
    </citation>
    <scope>FUNCTION</scope>
</reference>
<evidence type="ECO:0000269" key="1">
    <source>
    </source>
</evidence>
<evidence type="ECO:0000305" key="2"/>